<protein>
    <recommendedName>
        <fullName>Nucleolar protein 56</fullName>
    </recommendedName>
    <alternativeName>
        <fullName>Ribosome biosynthesis protein sik1</fullName>
    </alternativeName>
</protein>
<gene>
    <name type="primary">nop56</name>
    <name type="synonym">sik1</name>
    <name type="ORF">SPBC646.10c</name>
</gene>
<dbReference type="EMBL" id="CU329671">
    <property type="protein sequence ID" value="CAA22814.1"/>
    <property type="molecule type" value="Genomic_DNA"/>
</dbReference>
<dbReference type="PIR" id="T40586">
    <property type="entry name" value="T40586"/>
</dbReference>
<dbReference type="RefSeq" id="NP_595368.1">
    <property type="nucleotide sequence ID" value="NM_001021276.2"/>
</dbReference>
<dbReference type="SMR" id="O94514"/>
<dbReference type="BioGRID" id="277602">
    <property type="interactions" value="17"/>
</dbReference>
<dbReference type="FunCoup" id="O94514">
    <property type="interactions" value="1015"/>
</dbReference>
<dbReference type="IntAct" id="O94514">
    <property type="interactions" value="1"/>
</dbReference>
<dbReference type="STRING" id="284812.O94514"/>
<dbReference type="iPTMnet" id="O94514"/>
<dbReference type="PaxDb" id="4896-SPBC646.10c.1"/>
<dbReference type="EnsemblFungi" id="SPBC646.10c.1">
    <property type="protein sequence ID" value="SPBC646.10c.1:pep"/>
    <property type="gene ID" value="SPBC646.10c"/>
</dbReference>
<dbReference type="GeneID" id="2541087"/>
<dbReference type="KEGG" id="spo:2541087"/>
<dbReference type="PomBase" id="SPBC646.10c">
    <property type="gene designation" value="nop56"/>
</dbReference>
<dbReference type="VEuPathDB" id="FungiDB:SPBC646.10c"/>
<dbReference type="eggNOG" id="KOG2573">
    <property type="taxonomic scope" value="Eukaryota"/>
</dbReference>
<dbReference type="HOGENOM" id="CLU_015495_4_0_1"/>
<dbReference type="InParanoid" id="O94514"/>
<dbReference type="OMA" id="PDNYMFA"/>
<dbReference type="PhylomeDB" id="O94514"/>
<dbReference type="Reactome" id="R-SPO-6791226">
    <property type="pathway name" value="Major pathway of rRNA processing in the nucleolus and cytosol"/>
</dbReference>
<dbReference type="PRO" id="PR:O94514"/>
<dbReference type="Proteomes" id="UP000002485">
    <property type="component" value="Chromosome II"/>
</dbReference>
<dbReference type="GO" id="GO:0031428">
    <property type="term" value="C:box C/D methylation guide snoRNP complex"/>
    <property type="evidence" value="ECO:0000318"/>
    <property type="project" value="GO_Central"/>
</dbReference>
<dbReference type="GO" id="GO:0005730">
    <property type="term" value="C:nucleolus"/>
    <property type="evidence" value="ECO:0007005"/>
    <property type="project" value="PomBase"/>
</dbReference>
<dbReference type="GO" id="GO:0005634">
    <property type="term" value="C:nucleus"/>
    <property type="evidence" value="ECO:0007005"/>
    <property type="project" value="PomBase"/>
</dbReference>
<dbReference type="GO" id="GO:0030532">
    <property type="term" value="C:small nuclear ribonucleoprotein complex"/>
    <property type="evidence" value="ECO:0000266"/>
    <property type="project" value="PomBase"/>
</dbReference>
<dbReference type="GO" id="GO:0032040">
    <property type="term" value="C:small-subunit processome"/>
    <property type="evidence" value="ECO:0000314"/>
    <property type="project" value="PomBase"/>
</dbReference>
<dbReference type="GO" id="GO:0030515">
    <property type="term" value="F:snoRNA binding"/>
    <property type="evidence" value="ECO:0000318"/>
    <property type="project" value="GO_Central"/>
</dbReference>
<dbReference type="GO" id="GO:0000452">
    <property type="term" value="P:snoRNA guided rRNA 2'-O-methylation"/>
    <property type="evidence" value="ECO:0000266"/>
    <property type="project" value="PomBase"/>
</dbReference>
<dbReference type="FunFam" id="1.10.246.90:FF:000001">
    <property type="entry name" value="Nucleolar protein 56"/>
    <property type="match status" value="1"/>
</dbReference>
<dbReference type="FunFam" id="1.10.287.4070:FF:000002">
    <property type="entry name" value="Nucleolar protein 56"/>
    <property type="match status" value="1"/>
</dbReference>
<dbReference type="Gene3D" id="1.10.287.4070">
    <property type="match status" value="1"/>
</dbReference>
<dbReference type="Gene3D" id="1.10.246.90">
    <property type="entry name" value="Nop domain"/>
    <property type="match status" value="1"/>
</dbReference>
<dbReference type="InterPro" id="IPR045056">
    <property type="entry name" value="Nop56/Nop58"/>
</dbReference>
<dbReference type="InterPro" id="IPR012974">
    <property type="entry name" value="NOP58/56_N"/>
</dbReference>
<dbReference type="InterPro" id="IPR042239">
    <property type="entry name" value="Nop_C"/>
</dbReference>
<dbReference type="InterPro" id="IPR002687">
    <property type="entry name" value="Nop_dom"/>
</dbReference>
<dbReference type="InterPro" id="IPR036070">
    <property type="entry name" value="Nop_dom_sf"/>
</dbReference>
<dbReference type="InterPro" id="IPR012976">
    <property type="entry name" value="NOSIC"/>
</dbReference>
<dbReference type="PANTHER" id="PTHR10894">
    <property type="entry name" value="NUCLEOLAR PROTEIN 5 NUCLEOLAR PROTEIN NOP5 NOP58"/>
    <property type="match status" value="1"/>
</dbReference>
<dbReference type="PANTHER" id="PTHR10894:SF0">
    <property type="entry name" value="NUCLEOLAR PROTEIN 56"/>
    <property type="match status" value="1"/>
</dbReference>
<dbReference type="Pfam" id="PF01798">
    <property type="entry name" value="Nop"/>
    <property type="match status" value="1"/>
</dbReference>
<dbReference type="Pfam" id="PF08156">
    <property type="entry name" value="NOP5NT"/>
    <property type="match status" value="1"/>
</dbReference>
<dbReference type="SMART" id="SM00931">
    <property type="entry name" value="NOSIC"/>
    <property type="match status" value="1"/>
</dbReference>
<dbReference type="SUPFAM" id="SSF89124">
    <property type="entry name" value="Nop domain"/>
    <property type="match status" value="1"/>
</dbReference>
<dbReference type="PROSITE" id="PS51358">
    <property type="entry name" value="NOP"/>
    <property type="match status" value="1"/>
</dbReference>
<keyword id="KW-0539">Nucleus</keyword>
<keyword id="KW-1185">Reference proteome</keyword>
<keyword id="KW-0687">Ribonucleoprotein</keyword>
<keyword id="KW-0690">Ribosome biogenesis</keyword>
<comment type="function">
    <text evidence="1">Required for 60S ribosomal subunit synthesis.</text>
</comment>
<comment type="subunit">
    <text evidence="1">Component of the ribosomal small subunit (SSU) processome.</text>
</comment>
<comment type="subcellular location">
    <subcellularLocation>
        <location evidence="4">Nucleus</location>
        <location evidence="4">Nucleolus</location>
    </subcellularLocation>
</comment>
<comment type="similarity">
    <text evidence="5">Belongs to the NOP5/NOP56 family.</text>
</comment>
<reference key="1">
    <citation type="journal article" date="2002" name="Nature">
        <title>The genome sequence of Schizosaccharomyces pombe.</title>
        <authorList>
            <person name="Wood V."/>
            <person name="Gwilliam R."/>
            <person name="Rajandream M.A."/>
            <person name="Lyne M.H."/>
            <person name="Lyne R."/>
            <person name="Stewart A."/>
            <person name="Sgouros J.G."/>
            <person name="Peat N."/>
            <person name="Hayles J."/>
            <person name="Baker S.G."/>
            <person name="Basham D."/>
            <person name="Bowman S."/>
            <person name="Brooks K."/>
            <person name="Brown D."/>
            <person name="Brown S."/>
            <person name="Chillingworth T."/>
            <person name="Churcher C.M."/>
            <person name="Collins M."/>
            <person name="Connor R."/>
            <person name="Cronin A."/>
            <person name="Davis P."/>
            <person name="Feltwell T."/>
            <person name="Fraser A."/>
            <person name="Gentles S."/>
            <person name="Goble A."/>
            <person name="Hamlin N."/>
            <person name="Harris D.E."/>
            <person name="Hidalgo J."/>
            <person name="Hodgson G."/>
            <person name="Holroyd S."/>
            <person name="Hornsby T."/>
            <person name="Howarth S."/>
            <person name="Huckle E.J."/>
            <person name="Hunt S."/>
            <person name="Jagels K."/>
            <person name="James K.D."/>
            <person name="Jones L."/>
            <person name="Jones M."/>
            <person name="Leather S."/>
            <person name="McDonald S."/>
            <person name="McLean J."/>
            <person name="Mooney P."/>
            <person name="Moule S."/>
            <person name="Mungall K.L."/>
            <person name="Murphy L.D."/>
            <person name="Niblett D."/>
            <person name="Odell C."/>
            <person name="Oliver K."/>
            <person name="O'Neil S."/>
            <person name="Pearson D."/>
            <person name="Quail M.A."/>
            <person name="Rabbinowitsch E."/>
            <person name="Rutherford K.M."/>
            <person name="Rutter S."/>
            <person name="Saunders D."/>
            <person name="Seeger K."/>
            <person name="Sharp S."/>
            <person name="Skelton J."/>
            <person name="Simmonds M.N."/>
            <person name="Squares R."/>
            <person name="Squares S."/>
            <person name="Stevens K."/>
            <person name="Taylor K."/>
            <person name="Taylor R.G."/>
            <person name="Tivey A."/>
            <person name="Walsh S.V."/>
            <person name="Warren T."/>
            <person name="Whitehead S."/>
            <person name="Woodward J.R."/>
            <person name="Volckaert G."/>
            <person name="Aert R."/>
            <person name="Robben J."/>
            <person name="Grymonprez B."/>
            <person name="Weltjens I."/>
            <person name="Vanstreels E."/>
            <person name="Rieger M."/>
            <person name="Schaefer M."/>
            <person name="Mueller-Auer S."/>
            <person name="Gabel C."/>
            <person name="Fuchs M."/>
            <person name="Duesterhoeft A."/>
            <person name="Fritzc C."/>
            <person name="Holzer E."/>
            <person name="Moestl D."/>
            <person name="Hilbert H."/>
            <person name="Borzym K."/>
            <person name="Langer I."/>
            <person name="Beck A."/>
            <person name="Lehrach H."/>
            <person name="Reinhardt R."/>
            <person name="Pohl T.M."/>
            <person name="Eger P."/>
            <person name="Zimmermann W."/>
            <person name="Wedler H."/>
            <person name="Wambutt R."/>
            <person name="Purnelle B."/>
            <person name="Goffeau A."/>
            <person name="Cadieu E."/>
            <person name="Dreano S."/>
            <person name="Gloux S."/>
            <person name="Lelaure V."/>
            <person name="Mottier S."/>
            <person name="Galibert F."/>
            <person name="Aves S.J."/>
            <person name="Xiang Z."/>
            <person name="Hunt C."/>
            <person name="Moore K."/>
            <person name="Hurst S.M."/>
            <person name="Lucas M."/>
            <person name="Rochet M."/>
            <person name="Gaillardin C."/>
            <person name="Tallada V.A."/>
            <person name="Garzon A."/>
            <person name="Thode G."/>
            <person name="Daga R.R."/>
            <person name="Cruzado L."/>
            <person name="Jimenez J."/>
            <person name="Sanchez M."/>
            <person name="del Rey F."/>
            <person name="Benito J."/>
            <person name="Dominguez A."/>
            <person name="Revuelta J.L."/>
            <person name="Moreno S."/>
            <person name="Armstrong J."/>
            <person name="Forsburg S.L."/>
            <person name="Cerutti L."/>
            <person name="Lowe T."/>
            <person name="McCombie W.R."/>
            <person name="Paulsen I."/>
            <person name="Potashkin J."/>
            <person name="Shpakovski G.V."/>
            <person name="Ussery D."/>
            <person name="Barrell B.G."/>
            <person name="Nurse P."/>
        </authorList>
    </citation>
    <scope>NUCLEOTIDE SEQUENCE [LARGE SCALE GENOMIC DNA]</scope>
    <source>
        <strain>972 / ATCC 24843</strain>
    </source>
</reference>
<reference key="2">
    <citation type="journal article" date="2006" name="Nat. Biotechnol.">
        <title>ORFeome cloning and global analysis of protein localization in the fission yeast Schizosaccharomyces pombe.</title>
        <authorList>
            <person name="Matsuyama A."/>
            <person name="Arai R."/>
            <person name="Yashiroda Y."/>
            <person name="Shirai A."/>
            <person name="Kamata A."/>
            <person name="Sekido S."/>
            <person name="Kobayashi Y."/>
            <person name="Hashimoto A."/>
            <person name="Hamamoto M."/>
            <person name="Hiraoka Y."/>
            <person name="Horinouchi S."/>
            <person name="Yoshida M."/>
        </authorList>
    </citation>
    <scope>SUBCELLULAR LOCATION [LARGE SCALE ANALYSIS]</scope>
</reference>
<organism>
    <name type="scientific">Schizosaccharomyces pombe (strain 972 / ATCC 24843)</name>
    <name type="common">Fission yeast</name>
    <dbReference type="NCBI Taxonomy" id="284812"/>
    <lineage>
        <taxon>Eukaryota</taxon>
        <taxon>Fungi</taxon>
        <taxon>Dikarya</taxon>
        <taxon>Ascomycota</taxon>
        <taxon>Taphrinomycotina</taxon>
        <taxon>Schizosaccharomycetes</taxon>
        <taxon>Schizosaccharomycetales</taxon>
        <taxon>Schizosaccharomycetaceae</taxon>
        <taxon>Schizosaccharomyces</taxon>
    </lineage>
</organism>
<proteinExistence type="inferred from homology"/>
<evidence type="ECO:0000250" key="1"/>
<evidence type="ECO:0000255" key="2">
    <source>
        <dbReference type="PROSITE-ProRule" id="PRU00690"/>
    </source>
</evidence>
<evidence type="ECO:0000256" key="3">
    <source>
        <dbReference type="SAM" id="MobiDB-lite"/>
    </source>
</evidence>
<evidence type="ECO:0000269" key="4">
    <source>
    </source>
</evidence>
<evidence type="ECO:0000305" key="5"/>
<name>NOP56_SCHPO</name>
<sequence length="497" mass="55388">MADYLLYESATGYSLFDVVGADQIAAKTKEVQLSLQDISKFGKVVQLRSFIPFKNAAHALENANDISEGVLNDFLKNFLELNLPKASKKKKVSLGVQDKNLATSIKSEIDAIECDTSELTQDLLRGIRFHGDKLLKQLSPGDFERAQLGLGHSYSRAKVKFNVNRNDNMIIQAIAILDQLDKDINTFAMRMKEWYSWHFPELSKIVGDNYKYAVIVTLVGDKTTINDEMLHDLAAVVDDDKDIAQSIINAGKVSMGQDISEIDLENILSFAERVIKLSNYRKQLHNYLVQKMNVVAPNLAELIGEMVGARLISHAGSLTNLSKCPASTVQILGAEKALFRALKTRGNTPKYGIIYHSSFIGKAGAKNKGRISRFLANKCSIASRIDNFSDAPTTAFGQVLRRQVEERLNFFDTGVAPTRNSIAMAEAYEKALSSVNIDGDEEVDIDVEETVETISEKPSKKEKKDKKEKKKEKSKKKRSADDASEEVKKSKKKKKSH</sequence>
<accession>O94514</accession>
<feature type="chain" id="PRO_0000337263" description="Nucleolar protein 56">
    <location>
        <begin position="1"/>
        <end position="497"/>
    </location>
</feature>
<feature type="domain" description="Nop" evidence="2">
    <location>
        <begin position="295"/>
        <end position="413"/>
    </location>
</feature>
<feature type="region of interest" description="Disordered" evidence="3">
    <location>
        <begin position="448"/>
        <end position="497"/>
    </location>
</feature>
<feature type="compositionally biased region" description="Basic residues" evidence="3">
    <location>
        <begin position="460"/>
        <end position="478"/>
    </location>
</feature>
<feature type="compositionally biased region" description="Basic and acidic residues" evidence="3">
    <location>
        <begin position="479"/>
        <end position="488"/>
    </location>
</feature>